<reference key="1">
    <citation type="journal article" date="2007" name="Nat. Biotechnol.">
        <title>Complete genome sequence of the erythromycin-producing bacterium Saccharopolyspora erythraea NRRL23338.</title>
        <authorList>
            <person name="Oliynyk M."/>
            <person name="Samborskyy M."/>
            <person name="Lester J.B."/>
            <person name="Mironenko T."/>
            <person name="Scott N."/>
            <person name="Dickens S."/>
            <person name="Haydock S.F."/>
            <person name="Leadlay P.F."/>
        </authorList>
    </citation>
    <scope>NUCLEOTIDE SEQUENCE [LARGE SCALE GENOMIC DNA]</scope>
    <source>
        <strain>ATCC 11635 / DSM 40517 / JCM 4748 / NBRC 13426 / NCIMB 8594 / NRRL 2338</strain>
    </source>
</reference>
<comment type="function">
    <text evidence="1">Binds 23S rRNA and is also seen to make contacts with the A and possibly P site tRNAs.</text>
</comment>
<comment type="subunit">
    <text evidence="1">Part of the 50S ribosomal subunit.</text>
</comment>
<comment type="similarity">
    <text evidence="1">Belongs to the universal ribosomal protein uL16 family.</text>
</comment>
<sequence>MLVPRRVKWRKSHAPKRKGFAKGGTRINFGEYGIQAIEHGYVTNRQIESARIAITRHVKRGGKVWINIFPDRPLTKKPAETRQGSGKGSPESWVANVKPGRVMFELNFPNEKTAIEALTRAAHKLPMKCKIVSREAGDF</sequence>
<dbReference type="EMBL" id="AM420293">
    <property type="protein sequence ID" value="CAM05993.1"/>
    <property type="molecule type" value="Genomic_DNA"/>
</dbReference>
<dbReference type="RefSeq" id="WP_009948636.1">
    <property type="nucleotide sequence ID" value="NC_009142.1"/>
</dbReference>
<dbReference type="SMR" id="A4FPL8"/>
<dbReference type="STRING" id="405948.SACE_6829"/>
<dbReference type="KEGG" id="sen:SACE_6829"/>
<dbReference type="eggNOG" id="COG0197">
    <property type="taxonomic scope" value="Bacteria"/>
</dbReference>
<dbReference type="HOGENOM" id="CLU_078858_2_1_11"/>
<dbReference type="OrthoDB" id="9802589at2"/>
<dbReference type="Proteomes" id="UP000006728">
    <property type="component" value="Chromosome"/>
</dbReference>
<dbReference type="GO" id="GO:0022625">
    <property type="term" value="C:cytosolic large ribosomal subunit"/>
    <property type="evidence" value="ECO:0007669"/>
    <property type="project" value="TreeGrafter"/>
</dbReference>
<dbReference type="GO" id="GO:0019843">
    <property type="term" value="F:rRNA binding"/>
    <property type="evidence" value="ECO:0007669"/>
    <property type="project" value="UniProtKB-UniRule"/>
</dbReference>
<dbReference type="GO" id="GO:0003735">
    <property type="term" value="F:structural constituent of ribosome"/>
    <property type="evidence" value="ECO:0007669"/>
    <property type="project" value="InterPro"/>
</dbReference>
<dbReference type="GO" id="GO:0000049">
    <property type="term" value="F:tRNA binding"/>
    <property type="evidence" value="ECO:0007669"/>
    <property type="project" value="UniProtKB-KW"/>
</dbReference>
<dbReference type="GO" id="GO:0006412">
    <property type="term" value="P:translation"/>
    <property type="evidence" value="ECO:0007669"/>
    <property type="project" value="UniProtKB-UniRule"/>
</dbReference>
<dbReference type="CDD" id="cd01433">
    <property type="entry name" value="Ribosomal_L16_L10e"/>
    <property type="match status" value="1"/>
</dbReference>
<dbReference type="FunFam" id="3.90.1170.10:FF:000001">
    <property type="entry name" value="50S ribosomal protein L16"/>
    <property type="match status" value="1"/>
</dbReference>
<dbReference type="Gene3D" id="3.90.1170.10">
    <property type="entry name" value="Ribosomal protein L10e/L16"/>
    <property type="match status" value="1"/>
</dbReference>
<dbReference type="HAMAP" id="MF_01342">
    <property type="entry name" value="Ribosomal_uL16"/>
    <property type="match status" value="1"/>
</dbReference>
<dbReference type="InterPro" id="IPR047873">
    <property type="entry name" value="Ribosomal_uL16"/>
</dbReference>
<dbReference type="InterPro" id="IPR000114">
    <property type="entry name" value="Ribosomal_uL16_bact-type"/>
</dbReference>
<dbReference type="InterPro" id="IPR020798">
    <property type="entry name" value="Ribosomal_uL16_CS"/>
</dbReference>
<dbReference type="InterPro" id="IPR016180">
    <property type="entry name" value="Ribosomal_uL16_dom"/>
</dbReference>
<dbReference type="InterPro" id="IPR036920">
    <property type="entry name" value="Ribosomal_uL16_sf"/>
</dbReference>
<dbReference type="NCBIfam" id="TIGR01164">
    <property type="entry name" value="rplP_bact"/>
    <property type="match status" value="1"/>
</dbReference>
<dbReference type="PANTHER" id="PTHR12220">
    <property type="entry name" value="50S/60S RIBOSOMAL PROTEIN L16"/>
    <property type="match status" value="1"/>
</dbReference>
<dbReference type="PANTHER" id="PTHR12220:SF13">
    <property type="entry name" value="LARGE RIBOSOMAL SUBUNIT PROTEIN UL16M"/>
    <property type="match status" value="1"/>
</dbReference>
<dbReference type="Pfam" id="PF00252">
    <property type="entry name" value="Ribosomal_L16"/>
    <property type="match status" value="1"/>
</dbReference>
<dbReference type="PRINTS" id="PR00060">
    <property type="entry name" value="RIBOSOMALL16"/>
</dbReference>
<dbReference type="SUPFAM" id="SSF54686">
    <property type="entry name" value="Ribosomal protein L16p/L10e"/>
    <property type="match status" value="1"/>
</dbReference>
<dbReference type="PROSITE" id="PS00586">
    <property type="entry name" value="RIBOSOMAL_L16_1"/>
    <property type="match status" value="1"/>
</dbReference>
<evidence type="ECO:0000255" key="1">
    <source>
        <dbReference type="HAMAP-Rule" id="MF_01342"/>
    </source>
</evidence>
<evidence type="ECO:0000256" key="2">
    <source>
        <dbReference type="SAM" id="MobiDB-lite"/>
    </source>
</evidence>
<evidence type="ECO:0000305" key="3"/>
<protein>
    <recommendedName>
        <fullName evidence="1">Large ribosomal subunit protein uL16</fullName>
    </recommendedName>
    <alternativeName>
        <fullName evidence="3">50S ribosomal protein L16</fullName>
    </alternativeName>
</protein>
<name>RL16_SACEN</name>
<feature type="chain" id="PRO_1000054697" description="Large ribosomal subunit protein uL16">
    <location>
        <begin position="1"/>
        <end position="139"/>
    </location>
</feature>
<feature type="region of interest" description="Disordered" evidence="2">
    <location>
        <begin position="74"/>
        <end position="94"/>
    </location>
</feature>
<organism>
    <name type="scientific">Saccharopolyspora erythraea (strain ATCC 11635 / DSM 40517 / JCM 4748 / NBRC 13426 / NCIMB 8594 / NRRL 2338)</name>
    <dbReference type="NCBI Taxonomy" id="405948"/>
    <lineage>
        <taxon>Bacteria</taxon>
        <taxon>Bacillati</taxon>
        <taxon>Actinomycetota</taxon>
        <taxon>Actinomycetes</taxon>
        <taxon>Pseudonocardiales</taxon>
        <taxon>Pseudonocardiaceae</taxon>
        <taxon>Saccharopolyspora</taxon>
    </lineage>
</organism>
<accession>A4FPL8</accession>
<gene>
    <name evidence="1" type="primary">rplP</name>
    <name type="ordered locus">SACE_6829</name>
</gene>
<keyword id="KW-1185">Reference proteome</keyword>
<keyword id="KW-0687">Ribonucleoprotein</keyword>
<keyword id="KW-0689">Ribosomal protein</keyword>
<keyword id="KW-0694">RNA-binding</keyword>
<keyword id="KW-0699">rRNA-binding</keyword>
<keyword id="KW-0820">tRNA-binding</keyword>
<proteinExistence type="inferred from homology"/>